<name>GD1L1_MOUSE</name>
<accession>Q8VE33</accession>
<accession>A2A5I0</accession>
<reference key="1">
    <citation type="journal article" date="2009" name="PLoS Biol.">
        <title>Lineage-specific biology revealed by a finished genome assembly of the mouse.</title>
        <authorList>
            <person name="Church D.M."/>
            <person name="Goodstadt L."/>
            <person name="Hillier L.W."/>
            <person name="Zody M.C."/>
            <person name="Goldstein S."/>
            <person name="She X."/>
            <person name="Bult C.J."/>
            <person name="Agarwala R."/>
            <person name="Cherry J.L."/>
            <person name="DiCuccio M."/>
            <person name="Hlavina W."/>
            <person name="Kapustin Y."/>
            <person name="Meric P."/>
            <person name="Maglott D."/>
            <person name="Birtle Z."/>
            <person name="Marques A.C."/>
            <person name="Graves T."/>
            <person name="Zhou S."/>
            <person name="Teague B."/>
            <person name="Potamousis K."/>
            <person name="Churas C."/>
            <person name="Place M."/>
            <person name="Herschleb J."/>
            <person name="Runnheim R."/>
            <person name="Forrest D."/>
            <person name="Amos-Landgraf J."/>
            <person name="Schwartz D.C."/>
            <person name="Cheng Z."/>
            <person name="Lindblad-Toh K."/>
            <person name="Eichler E.E."/>
            <person name="Ponting C.P."/>
        </authorList>
    </citation>
    <scope>NUCLEOTIDE SEQUENCE [LARGE SCALE GENOMIC DNA]</scope>
    <source>
        <strain>C57BL/6J</strain>
    </source>
</reference>
<reference key="2">
    <citation type="journal article" date="2004" name="Genome Res.">
        <title>The status, quality, and expansion of the NIH full-length cDNA project: the Mammalian Gene Collection (MGC).</title>
        <authorList>
            <consortium name="The MGC Project Team"/>
        </authorList>
    </citation>
    <scope>NUCLEOTIDE SEQUENCE [LARGE SCALE MRNA]</scope>
    <source>
        <tissue>Mammary tumor</tissue>
    </source>
</reference>
<reference key="3">
    <citation type="journal article" date="2010" name="Cell">
        <title>A tissue-specific atlas of mouse protein phosphorylation and expression.</title>
        <authorList>
            <person name="Huttlin E.L."/>
            <person name="Jedrychowski M.P."/>
            <person name="Elias J.E."/>
            <person name="Goswami T."/>
            <person name="Rad R."/>
            <person name="Beausoleil S.A."/>
            <person name="Villen J."/>
            <person name="Haas W."/>
            <person name="Sowa M.E."/>
            <person name="Gygi S.P."/>
        </authorList>
    </citation>
    <scope>IDENTIFICATION BY MASS SPECTROMETRY [LARGE SCALE ANALYSIS]</scope>
    <source>
        <tissue>Brain</tissue>
    </source>
</reference>
<keyword id="KW-0175">Coiled coil</keyword>
<keyword id="KW-1185">Reference proteome</keyword>
<proteinExistence type="evidence at protein level"/>
<sequence>MATPNNLTPTNCSWWPISALESDAAKPVETPDAPEASSPAHWPKESLVLYHWTQSFSSQKRLQVRLVIAEKGLACEERDVSLPQSEHKEPWFMRLNLGEEVPVIIHRDNIISDYDQIIDYVERTFTGEHVVALMPEAGSPQHARVLQYRELLDALPMDAYTHGCILHPELTTDSMIPKYATAEIRRHLANATTDLMKLDHEEEPQLSEPYLSKQKKLMAKILEHDDVSYLKKILGELAMVLDQIEAELEKRKLENEGQTCELWLCGCAFTLADVLLGATLHRLKFLGLSKKYWEDGSRPNLQSFFERVQRRFAFRKVLGDIHTTLLSAVIPNAFRLVKRKPPSFFGASFLMGSLGGMGYFAYWYLKKKYI</sequence>
<comment type="similarity">
    <text evidence="1">Belongs to the GST superfamily.</text>
</comment>
<comment type="caution">
    <text evidence="1">While belonging to the GST superfamily, it probably lacks glutathione transferase activity.</text>
</comment>
<organism>
    <name type="scientific">Mus musculus</name>
    <name type="common">Mouse</name>
    <dbReference type="NCBI Taxonomy" id="10090"/>
    <lineage>
        <taxon>Eukaryota</taxon>
        <taxon>Metazoa</taxon>
        <taxon>Chordata</taxon>
        <taxon>Craniata</taxon>
        <taxon>Vertebrata</taxon>
        <taxon>Euteleostomi</taxon>
        <taxon>Mammalia</taxon>
        <taxon>Eutheria</taxon>
        <taxon>Euarchontoglires</taxon>
        <taxon>Glires</taxon>
        <taxon>Rodentia</taxon>
        <taxon>Myomorpha</taxon>
        <taxon>Muroidea</taxon>
        <taxon>Muridae</taxon>
        <taxon>Murinae</taxon>
        <taxon>Mus</taxon>
        <taxon>Mus</taxon>
    </lineage>
</organism>
<protein>
    <recommendedName>
        <fullName>Ganglioside-induced differentiation-associated protein 1-like 1</fullName>
        <shortName>GDAP1-L1</shortName>
    </recommendedName>
</protein>
<dbReference type="EMBL" id="AL591488">
    <property type="status" value="NOT_ANNOTATED_CDS"/>
    <property type="molecule type" value="Genomic_DNA"/>
</dbReference>
<dbReference type="EMBL" id="BC019941">
    <property type="protein sequence ID" value="AAH19941.1"/>
    <property type="molecule type" value="mRNA"/>
</dbReference>
<dbReference type="SMR" id="Q8VE33"/>
<dbReference type="FunCoup" id="Q8VE33">
    <property type="interactions" value="328"/>
</dbReference>
<dbReference type="STRING" id="10090.ENSMUSP00000105047"/>
<dbReference type="GlyGen" id="Q8VE33">
    <property type="glycosylation" value="1 site, 1 O-linked glycan (1 site)"/>
</dbReference>
<dbReference type="iPTMnet" id="Q8VE33"/>
<dbReference type="PhosphoSitePlus" id="Q8VE33"/>
<dbReference type="SwissPalm" id="Q8VE33"/>
<dbReference type="PaxDb" id="10090-ENSMUSP00000018087"/>
<dbReference type="ProteomicsDB" id="265738"/>
<dbReference type="Antibodypedia" id="27351">
    <property type="antibodies" value="154 antibodies from 19 providers"/>
</dbReference>
<dbReference type="Ensembl" id="ENSMUST00000109421.10">
    <property type="protein sequence ID" value="ENSMUSP00000105048.4"/>
    <property type="gene ID" value="ENSMUSG00000017943.16"/>
</dbReference>
<dbReference type="UCSC" id="uc012ciq.1">
    <property type="organism name" value="mouse"/>
</dbReference>
<dbReference type="AGR" id="MGI:2385163"/>
<dbReference type="MGI" id="MGI:2385163">
    <property type="gene designation" value="Gdap1l1"/>
</dbReference>
<dbReference type="VEuPathDB" id="HostDB:ENSMUSG00000017943"/>
<dbReference type="eggNOG" id="KOG4420">
    <property type="taxonomic scope" value="Eukaryota"/>
</dbReference>
<dbReference type="GeneTree" id="ENSGT00940000160178"/>
<dbReference type="HOGENOM" id="CLU_049129_1_0_1"/>
<dbReference type="InParanoid" id="Q8VE33"/>
<dbReference type="OrthoDB" id="249703at2759"/>
<dbReference type="PhylomeDB" id="Q8VE33"/>
<dbReference type="CD-CODE" id="CE726F99">
    <property type="entry name" value="Postsynaptic density"/>
</dbReference>
<dbReference type="PRO" id="PR:Q8VE33"/>
<dbReference type="Proteomes" id="UP000000589">
    <property type="component" value="Chromosome 2"/>
</dbReference>
<dbReference type="RNAct" id="Q8VE33">
    <property type="molecule type" value="protein"/>
</dbReference>
<dbReference type="Bgee" id="ENSMUSG00000017943">
    <property type="expression patterns" value="Expressed in embryonic brain and 125 other cell types or tissues"/>
</dbReference>
<dbReference type="ExpressionAtlas" id="Q8VE33">
    <property type="expression patterns" value="baseline and differential"/>
</dbReference>
<dbReference type="Gene3D" id="1.20.1050.10">
    <property type="match status" value="1"/>
</dbReference>
<dbReference type="Gene3D" id="3.40.30.10">
    <property type="entry name" value="Glutaredoxin"/>
    <property type="match status" value="1"/>
</dbReference>
<dbReference type="InterPro" id="IPR010987">
    <property type="entry name" value="Glutathione-S-Trfase_C-like"/>
</dbReference>
<dbReference type="InterPro" id="IPR036282">
    <property type="entry name" value="Glutathione-S-Trfase_C_sf"/>
</dbReference>
<dbReference type="InterPro" id="IPR004045">
    <property type="entry name" value="Glutathione_S-Trfase_N"/>
</dbReference>
<dbReference type="InterPro" id="IPR036249">
    <property type="entry name" value="Thioredoxin-like_sf"/>
</dbReference>
<dbReference type="PANTHER" id="PTHR44188:SF2">
    <property type="entry name" value="GANGLIOSIDE-INDUCED DIFFERENTIATION-ASSOCIATED PROTEIN 1-LIKE 1"/>
    <property type="match status" value="1"/>
</dbReference>
<dbReference type="PANTHER" id="PTHR44188">
    <property type="entry name" value="GDAP1, ISOFORM A"/>
    <property type="match status" value="1"/>
</dbReference>
<dbReference type="Pfam" id="PF13410">
    <property type="entry name" value="GST_C_2"/>
    <property type="match status" value="1"/>
</dbReference>
<dbReference type="Pfam" id="PF13409">
    <property type="entry name" value="GST_N_2"/>
    <property type="match status" value="1"/>
</dbReference>
<dbReference type="SUPFAM" id="SSF47616">
    <property type="entry name" value="GST C-terminal domain-like"/>
    <property type="match status" value="1"/>
</dbReference>
<dbReference type="SUPFAM" id="SSF52833">
    <property type="entry name" value="Thioredoxin-like"/>
    <property type="match status" value="1"/>
</dbReference>
<dbReference type="PROSITE" id="PS50405">
    <property type="entry name" value="GST_CTER"/>
    <property type="match status" value="1"/>
</dbReference>
<dbReference type="PROSITE" id="PS50404">
    <property type="entry name" value="GST_NTER"/>
    <property type="match status" value="1"/>
</dbReference>
<evidence type="ECO:0000305" key="1"/>
<feature type="chain" id="PRO_0000186041" description="Ganglioside-induced differentiation-associated protein 1-like 1">
    <location>
        <begin position="1"/>
        <end position="370"/>
    </location>
</feature>
<feature type="domain" description="GST N-terminal">
    <location>
        <begin position="45"/>
        <end position="129"/>
    </location>
</feature>
<feature type="domain" description="GST C-terminal">
    <location>
        <begin position="177"/>
        <end position="344"/>
    </location>
</feature>
<gene>
    <name type="primary">Gdap1l1</name>
    <name type="synonym">Gdap1l</name>
</gene>